<reference key="1">
    <citation type="submission" date="2002-08" db="EMBL/GenBank/DDBJ databases">
        <title>Molecular cloning of phospholipase A2 from the venom glands of Echis carpet vipers.</title>
        <authorList>
            <person name="Harrison R.A."/>
            <person name="Bharati K."/>
            <person name="Hasson S."/>
        </authorList>
    </citation>
    <scope>NUCLEOTIDE SEQUENCE [MRNA]</scope>
    <source>
        <strain>Pakistan</strain>
        <tissue>Venom gland</tissue>
    </source>
</reference>
<sequence length="139" mass="15895">MRTLWIVAVWLVGVEGNLYQFGKMIKNKTGKPAMFSYSAYGCYCGWGGQGKPQDPSDRCCFLHDCCYTRVNNCSPKMTLYSYRFENGDIICGDNDPCRKAVCECDREAAICLGENVNTYDEKYRFYSSSYCTEEESEKC</sequence>
<dbReference type="EC" id="3.1.1.4"/>
<dbReference type="EMBL" id="AF539919">
    <property type="protein sequence ID" value="AAN77202.1"/>
    <property type="molecule type" value="mRNA"/>
</dbReference>
<dbReference type="SMR" id="P59170"/>
<dbReference type="GO" id="GO:0005576">
    <property type="term" value="C:extracellular region"/>
    <property type="evidence" value="ECO:0007669"/>
    <property type="project" value="UniProtKB-SubCell"/>
</dbReference>
<dbReference type="GO" id="GO:0005509">
    <property type="term" value="F:calcium ion binding"/>
    <property type="evidence" value="ECO:0007669"/>
    <property type="project" value="InterPro"/>
</dbReference>
<dbReference type="GO" id="GO:0047498">
    <property type="term" value="F:calcium-dependent phospholipase A2 activity"/>
    <property type="evidence" value="ECO:0007669"/>
    <property type="project" value="TreeGrafter"/>
</dbReference>
<dbReference type="GO" id="GO:0005543">
    <property type="term" value="F:phospholipid binding"/>
    <property type="evidence" value="ECO:0007669"/>
    <property type="project" value="TreeGrafter"/>
</dbReference>
<dbReference type="GO" id="GO:0050482">
    <property type="term" value="P:arachidonate secretion"/>
    <property type="evidence" value="ECO:0007669"/>
    <property type="project" value="InterPro"/>
</dbReference>
<dbReference type="GO" id="GO:0016042">
    <property type="term" value="P:lipid catabolic process"/>
    <property type="evidence" value="ECO:0007669"/>
    <property type="project" value="UniProtKB-KW"/>
</dbReference>
<dbReference type="GO" id="GO:0042130">
    <property type="term" value="P:negative regulation of T cell proliferation"/>
    <property type="evidence" value="ECO:0007669"/>
    <property type="project" value="TreeGrafter"/>
</dbReference>
<dbReference type="GO" id="GO:0006644">
    <property type="term" value="P:phospholipid metabolic process"/>
    <property type="evidence" value="ECO:0007669"/>
    <property type="project" value="InterPro"/>
</dbReference>
<dbReference type="CDD" id="cd00125">
    <property type="entry name" value="PLA2c"/>
    <property type="match status" value="1"/>
</dbReference>
<dbReference type="FunFam" id="1.20.90.10:FF:000001">
    <property type="entry name" value="Basic phospholipase A2 homolog"/>
    <property type="match status" value="1"/>
</dbReference>
<dbReference type="Gene3D" id="1.20.90.10">
    <property type="entry name" value="Phospholipase A2 domain"/>
    <property type="match status" value="1"/>
</dbReference>
<dbReference type="InterPro" id="IPR001211">
    <property type="entry name" value="PLipase_A2"/>
</dbReference>
<dbReference type="InterPro" id="IPR033112">
    <property type="entry name" value="PLipase_A2_Asp_AS"/>
</dbReference>
<dbReference type="InterPro" id="IPR016090">
    <property type="entry name" value="PLipase_A2_dom"/>
</dbReference>
<dbReference type="InterPro" id="IPR036444">
    <property type="entry name" value="PLipase_A2_dom_sf"/>
</dbReference>
<dbReference type="InterPro" id="IPR033113">
    <property type="entry name" value="PLipase_A2_His_AS"/>
</dbReference>
<dbReference type="PANTHER" id="PTHR11716">
    <property type="entry name" value="PHOSPHOLIPASE A2 FAMILY MEMBER"/>
    <property type="match status" value="1"/>
</dbReference>
<dbReference type="PANTHER" id="PTHR11716:SF9">
    <property type="entry name" value="PHOSPHOLIPASE A2, MEMBRANE ASSOCIATED"/>
    <property type="match status" value="1"/>
</dbReference>
<dbReference type="Pfam" id="PF00068">
    <property type="entry name" value="Phospholip_A2_1"/>
    <property type="match status" value="1"/>
</dbReference>
<dbReference type="PRINTS" id="PR00389">
    <property type="entry name" value="PHPHLIPASEA2"/>
</dbReference>
<dbReference type="SMART" id="SM00085">
    <property type="entry name" value="PA2c"/>
    <property type="match status" value="1"/>
</dbReference>
<dbReference type="SUPFAM" id="SSF48619">
    <property type="entry name" value="Phospholipase A2, PLA2"/>
    <property type="match status" value="1"/>
</dbReference>
<dbReference type="PROSITE" id="PS00119">
    <property type="entry name" value="PA2_ASP"/>
    <property type="match status" value="1"/>
</dbReference>
<dbReference type="PROSITE" id="PS00118">
    <property type="entry name" value="PA2_HIS"/>
    <property type="match status" value="1"/>
</dbReference>
<proteinExistence type="evidence at transcript level"/>
<organism>
    <name type="scientific">Echis carinatus sochureki</name>
    <name type="common">Saw-scaled viper</name>
    <dbReference type="NCBI Taxonomy" id="124223"/>
    <lineage>
        <taxon>Eukaryota</taxon>
        <taxon>Metazoa</taxon>
        <taxon>Chordata</taxon>
        <taxon>Craniata</taxon>
        <taxon>Vertebrata</taxon>
        <taxon>Euteleostomi</taxon>
        <taxon>Lepidosauria</taxon>
        <taxon>Squamata</taxon>
        <taxon>Bifurcata</taxon>
        <taxon>Unidentata</taxon>
        <taxon>Episquamata</taxon>
        <taxon>Toxicofera</taxon>
        <taxon>Serpentes</taxon>
        <taxon>Colubroidea</taxon>
        <taxon>Viperidae</taxon>
        <taxon>Viperinae</taxon>
        <taxon>Echis</taxon>
    </lineage>
</organism>
<feature type="signal peptide" evidence="1">
    <location>
        <begin position="1"/>
        <end position="16"/>
    </location>
</feature>
<feature type="chain" id="PRO_0000022870" description="Acidic phospholipase A2 4">
    <location>
        <begin position="17"/>
        <end position="139"/>
    </location>
</feature>
<feature type="active site" evidence="1">
    <location>
        <position position="63"/>
    </location>
</feature>
<feature type="active site" evidence="1">
    <location>
        <position position="105"/>
    </location>
</feature>
<feature type="binding site" evidence="1">
    <location>
        <position position="43"/>
    </location>
    <ligand>
        <name>Ca(2+)</name>
        <dbReference type="ChEBI" id="CHEBI:29108"/>
    </ligand>
</feature>
<feature type="binding site" evidence="1">
    <location>
        <position position="45"/>
    </location>
    <ligand>
        <name>Ca(2+)</name>
        <dbReference type="ChEBI" id="CHEBI:29108"/>
    </ligand>
</feature>
<feature type="binding site" evidence="1">
    <location>
        <position position="47"/>
    </location>
    <ligand>
        <name>Ca(2+)</name>
        <dbReference type="ChEBI" id="CHEBI:29108"/>
    </ligand>
</feature>
<feature type="binding site" evidence="1">
    <location>
        <position position="64"/>
    </location>
    <ligand>
        <name>Ca(2+)</name>
        <dbReference type="ChEBI" id="CHEBI:29108"/>
    </ligand>
</feature>
<feature type="disulfide bond" evidence="1">
    <location>
        <begin position="42"/>
        <end position="131"/>
    </location>
</feature>
<feature type="disulfide bond" evidence="1">
    <location>
        <begin position="44"/>
        <end position="60"/>
    </location>
</feature>
<feature type="disulfide bond" evidence="1">
    <location>
        <begin position="59"/>
        <end position="111"/>
    </location>
</feature>
<feature type="disulfide bond" evidence="1">
    <location>
        <begin position="65"/>
        <end position="139"/>
    </location>
</feature>
<feature type="disulfide bond" evidence="1">
    <location>
        <begin position="66"/>
        <end position="104"/>
    </location>
</feature>
<feature type="disulfide bond" evidence="1">
    <location>
        <begin position="73"/>
        <end position="97"/>
    </location>
</feature>
<feature type="disulfide bond" evidence="1">
    <location>
        <begin position="91"/>
        <end position="102"/>
    </location>
</feature>
<accession>P59170</accession>
<keyword id="KW-0106">Calcium</keyword>
<keyword id="KW-1015">Disulfide bond</keyword>
<keyword id="KW-0378">Hydrolase</keyword>
<keyword id="KW-0442">Lipid degradation</keyword>
<keyword id="KW-0443">Lipid metabolism</keyword>
<keyword id="KW-0479">Metal-binding</keyword>
<keyword id="KW-0964">Secreted</keyword>
<keyword id="KW-0732">Signal</keyword>
<comment type="function">
    <text evidence="1">PLA2 catalyzes the calcium-dependent hydrolysis of the 2-acyl groups in 3-sn-phosphoglycerides.</text>
</comment>
<comment type="catalytic activity">
    <reaction evidence="2 3">
        <text>a 1,2-diacyl-sn-glycero-3-phosphocholine + H2O = a 1-acyl-sn-glycero-3-phosphocholine + a fatty acid + H(+)</text>
        <dbReference type="Rhea" id="RHEA:15801"/>
        <dbReference type="ChEBI" id="CHEBI:15377"/>
        <dbReference type="ChEBI" id="CHEBI:15378"/>
        <dbReference type="ChEBI" id="CHEBI:28868"/>
        <dbReference type="ChEBI" id="CHEBI:57643"/>
        <dbReference type="ChEBI" id="CHEBI:58168"/>
        <dbReference type="EC" id="3.1.1.4"/>
    </reaction>
</comment>
<comment type="cofactor">
    <cofactor evidence="1">
        <name>Ca(2+)</name>
        <dbReference type="ChEBI" id="CHEBI:29108"/>
    </cofactor>
    <text evidence="1">Binds 1 Ca(2+) ion.</text>
</comment>
<comment type="subcellular location">
    <subcellularLocation>
        <location evidence="1">Secreted</location>
    </subcellularLocation>
</comment>
<comment type="tissue specificity">
    <text>Expressed by the venom gland.</text>
</comment>
<comment type="similarity">
    <text evidence="4">Belongs to the phospholipase A2 family. Group II subfamily. D49 sub-subfamily.</text>
</comment>
<evidence type="ECO:0000250" key="1"/>
<evidence type="ECO:0000255" key="2">
    <source>
        <dbReference type="PROSITE-ProRule" id="PRU10035"/>
    </source>
</evidence>
<evidence type="ECO:0000255" key="3">
    <source>
        <dbReference type="PROSITE-ProRule" id="PRU10036"/>
    </source>
</evidence>
<evidence type="ECO:0000305" key="4"/>
<name>PA2A4_ECHCS</name>
<protein>
    <recommendedName>
        <fullName>Acidic phospholipase A2 4</fullName>
        <shortName>svPLA2</shortName>
        <ecNumber>3.1.1.4</ecNumber>
    </recommendedName>
    <alternativeName>
        <fullName>Phosphatidylcholine 2-acylhydrolase</fullName>
    </alternativeName>
</protein>